<dbReference type="EC" id="2.7.7.27" evidence="1"/>
<dbReference type="EMBL" id="AE016822">
    <property type="protein sequence ID" value="AAT89024.1"/>
    <property type="molecule type" value="Genomic_DNA"/>
</dbReference>
<dbReference type="RefSeq" id="WP_011186020.1">
    <property type="nucleotide sequence ID" value="NC_006087.1"/>
</dbReference>
<dbReference type="SMR" id="Q6AF21"/>
<dbReference type="STRING" id="281090.Lxx11760"/>
<dbReference type="KEGG" id="lxx:Lxx11760"/>
<dbReference type="eggNOG" id="COG0448">
    <property type="taxonomic scope" value="Bacteria"/>
</dbReference>
<dbReference type="HOGENOM" id="CLU_029499_14_1_11"/>
<dbReference type="UniPathway" id="UPA00164"/>
<dbReference type="Proteomes" id="UP000001306">
    <property type="component" value="Chromosome"/>
</dbReference>
<dbReference type="GO" id="GO:0005524">
    <property type="term" value="F:ATP binding"/>
    <property type="evidence" value="ECO:0007669"/>
    <property type="project" value="UniProtKB-KW"/>
</dbReference>
<dbReference type="GO" id="GO:0008878">
    <property type="term" value="F:glucose-1-phosphate adenylyltransferase activity"/>
    <property type="evidence" value="ECO:0007669"/>
    <property type="project" value="UniProtKB-UniRule"/>
</dbReference>
<dbReference type="GO" id="GO:0005978">
    <property type="term" value="P:glycogen biosynthetic process"/>
    <property type="evidence" value="ECO:0007669"/>
    <property type="project" value="UniProtKB-UniRule"/>
</dbReference>
<dbReference type="CDD" id="cd02508">
    <property type="entry name" value="ADP_Glucose_PP"/>
    <property type="match status" value="1"/>
</dbReference>
<dbReference type="CDD" id="cd04651">
    <property type="entry name" value="LbH_G1P_AT_C"/>
    <property type="match status" value="1"/>
</dbReference>
<dbReference type="Gene3D" id="2.160.10.10">
    <property type="entry name" value="Hexapeptide repeat proteins"/>
    <property type="match status" value="1"/>
</dbReference>
<dbReference type="Gene3D" id="3.90.550.10">
    <property type="entry name" value="Spore Coat Polysaccharide Biosynthesis Protein SpsA, Chain A"/>
    <property type="match status" value="1"/>
</dbReference>
<dbReference type="HAMAP" id="MF_00624">
    <property type="entry name" value="GlgC"/>
    <property type="match status" value="1"/>
</dbReference>
<dbReference type="InterPro" id="IPR011831">
    <property type="entry name" value="ADP-Glc_PPase"/>
</dbReference>
<dbReference type="InterPro" id="IPR005836">
    <property type="entry name" value="ADP_Glu_pyroP_CS"/>
</dbReference>
<dbReference type="InterPro" id="IPR023049">
    <property type="entry name" value="GlgC_bac"/>
</dbReference>
<dbReference type="InterPro" id="IPR056818">
    <property type="entry name" value="GlmU/GlgC-like_hexapep"/>
</dbReference>
<dbReference type="InterPro" id="IPR005835">
    <property type="entry name" value="NTP_transferase_dom"/>
</dbReference>
<dbReference type="InterPro" id="IPR029044">
    <property type="entry name" value="Nucleotide-diphossugar_trans"/>
</dbReference>
<dbReference type="InterPro" id="IPR011004">
    <property type="entry name" value="Trimer_LpxA-like_sf"/>
</dbReference>
<dbReference type="NCBIfam" id="NF002023">
    <property type="entry name" value="PRK00844.1"/>
    <property type="match status" value="1"/>
</dbReference>
<dbReference type="PANTHER" id="PTHR43523:SF2">
    <property type="entry name" value="GLUCOSE-1-PHOSPHATE ADENYLYLTRANSFERASE"/>
    <property type="match status" value="1"/>
</dbReference>
<dbReference type="PANTHER" id="PTHR43523">
    <property type="entry name" value="GLUCOSE-1-PHOSPHATE ADENYLYLTRANSFERASE-RELATED"/>
    <property type="match status" value="1"/>
</dbReference>
<dbReference type="Pfam" id="PF24894">
    <property type="entry name" value="Hexapep_GlmU"/>
    <property type="match status" value="1"/>
</dbReference>
<dbReference type="Pfam" id="PF00483">
    <property type="entry name" value="NTP_transferase"/>
    <property type="match status" value="1"/>
</dbReference>
<dbReference type="SUPFAM" id="SSF53448">
    <property type="entry name" value="Nucleotide-diphospho-sugar transferases"/>
    <property type="match status" value="1"/>
</dbReference>
<dbReference type="SUPFAM" id="SSF51161">
    <property type="entry name" value="Trimeric LpxA-like enzymes"/>
    <property type="match status" value="1"/>
</dbReference>
<dbReference type="PROSITE" id="PS00808">
    <property type="entry name" value="ADP_GLC_PYROPHOSPH_1"/>
    <property type="match status" value="1"/>
</dbReference>
<dbReference type="PROSITE" id="PS00809">
    <property type="entry name" value="ADP_GLC_PYROPHOSPH_2"/>
    <property type="match status" value="1"/>
</dbReference>
<dbReference type="PROSITE" id="PS00810">
    <property type="entry name" value="ADP_GLC_PYROPHOSPH_3"/>
    <property type="match status" value="1"/>
</dbReference>
<evidence type="ECO:0000255" key="1">
    <source>
        <dbReference type="HAMAP-Rule" id="MF_00624"/>
    </source>
</evidence>
<protein>
    <recommendedName>
        <fullName evidence="1">Glucose-1-phosphate adenylyltransferase</fullName>
        <ecNumber evidence="1">2.7.7.27</ecNumber>
    </recommendedName>
    <alternativeName>
        <fullName evidence="1">ADP-glucose pyrophosphorylase</fullName>
        <shortName evidence="1">ADPGlc PPase</shortName>
    </alternativeName>
    <alternativeName>
        <fullName evidence="1">ADP-glucose synthase</fullName>
    </alternativeName>
</protein>
<comment type="function">
    <text evidence="1">Involved in the biosynthesis of ADP-glucose, a building block required for the elongation reactions to produce glycogen. Catalyzes the reaction between ATP and alpha-D-glucose 1-phosphate (G1P) to produce pyrophosphate and ADP-Glc.</text>
</comment>
<comment type="catalytic activity">
    <reaction evidence="1">
        <text>alpha-D-glucose 1-phosphate + ATP + H(+) = ADP-alpha-D-glucose + diphosphate</text>
        <dbReference type="Rhea" id="RHEA:12120"/>
        <dbReference type="ChEBI" id="CHEBI:15378"/>
        <dbReference type="ChEBI" id="CHEBI:30616"/>
        <dbReference type="ChEBI" id="CHEBI:33019"/>
        <dbReference type="ChEBI" id="CHEBI:57498"/>
        <dbReference type="ChEBI" id="CHEBI:58601"/>
        <dbReference type="EC" id="2.7.7.27"/>
    </reaction>
</comment>
<comment type="pathway">
    <text evidence="1">Glycan biosynthesis; glycogen biosynthesis.</text>
</comment>
<comment type="subunit">
    <text evidence="1">Homotetramer.</text>
</comment>
<comment type="similarity">
    <text evidence="1">Belongs to the bacterial/plant glucose-1-phosphate adenylyltransferase family.</text>
</comment>
<sequence>MGAGKKIFGIVLAGGEGKRLMPLTTDRAKPAVPFGGQYRLIDFALSNLINSQLRQIVVLTQYKSHSLDRHISQTWRPDGMLNSYIASVPAQQRLGKRWFSGSADAILQSINLLRDEKPDIVVVVGADHVYRMDFGQMIRSHLDSGSSVTVAAIRQPVSLADQFGVIEVDPASPERIAAFREKPSDPVALPESPGEVLASMGNYVFTADALIAAVRRDADRPDSNHDMGGDIIPDFVARGEAGVYDFTNNEVPGSTDRDRYYWRDVGTIDSFFEAHQDLISALPVFNLYNRQWPIFSQVLNSPPAKIVRDGRGALGTTIDSIVSLGSVISGAHLERSVLGPWATVDSGAKVIDSVVFERALIEPNAFVGRAILDKDVVVAAGASIGVDPDRDRARGFTVTESGITVVGKGVHVVP</sequence>
<feature type="chain" id="PRO_0000195303" description="Glucose-1-phosphate adenylyltransferase">
    <location>
        <begin position="1"/>
        <end position="414"/>
    </location>
</feature>
<feature type="binding site" evidence="1">
    <location>
        <position position="164"/>
    </location>
    <ligand>
        <name>alpha-D-glucose 1-phosphate</name>
        <dbReference type="ChEBI" id="CHEBI:58601"/>
    </ligand>
</feature>
<feature type="binding site" evidence="1">
    <location>
        <begin position="181"/>
        <end position="182"/>
    </location>
    <ligand>
        <name>alpha-D-glucose 1-phosphate</name>
        <dbReference type="ChEBI" id="CHEBI:58601"/>
    </ligand>
</feature>
<feature type="binding site" evidence="1">
    <location>
        <position position="199"/>
    </location>
    <ligand>
        <name>alpha-D-glucose 1-phosphate</name>
        <dbReference type="ChEBI" id="CHEBI:58601"/>
    </ligand>
</feature>
<proteinExistence type="inferred from homology"/>
<organism>
    <name type="scientific">Leifsonia xyli subsp. xyli (strain CTCB07)</name>
    <dbReference type="NCBI Taxonomy" id="281090"/>
    <lineage>
        <taxon>Bacteria</taxon>
        <taxon>Bacillati</taxon>
        <taxon>Actinomycetota</taxon>
        <taxon>Actinomycetes</taxon>
        <taxon>Micrococcales</taxon>
        <taxon>Microbacteriaceae</taxon>
        <taxon>Leifsonia</taxon>
    </lineage>
</organism>
<name>GLGC_LEIXX</name>
<keyword id="KW-0067">ATP-binding</keyword>
<keyword id="KW-0119">Carbohydrate metabolism</keyword>
<keyword id="KW-0320">Glycogen biosynthesis</keyword>
<keyword id="KW-0321">Glycogen metabolism</keyword>
<keyword id="KW-0547">Nucleotide-binding</keyword>
<keyword id="KW-0548">Nucleotidyltransferase</keyword>
<keyword id="KW-1185">Reference proteome</keyword>
<keyword id="KW-0808">Transferase</keyword>
<gene>
    <name evidence="1" type="primary">glgC</name>
    <name type="ordered locus">Lxx11760</name>
</gene>
<reference key="1">
    <citation type="journal article" date="2004" name="Mol. Plant Microbe Interact.">
        <title>The genome sequence of the Gram-positive sugarcane pathogen Leifsonia xyli subsp. xyli.</title>
        <authorList>
            <person name="Monteiro-Vitorello C.B."/>
            <person name="Camargo L.E.A."/>
            <person name="Van Sluys M.A."/>
            <person name="Kitajima J.P."/>
            <person name="Truffi D."/>
            <person name="do Amaral A.M."/>
            <person name="Harakava R."/>
            <person name="de Oliveira J.C.F."/>
            <person name="Wood D."/>
            <person name="de Oliveira M.C."/>
            <person name="Miyaki C.Y."/>
            <person name="Takita M.A."/>
            <person name="da Silva A.C.R."/>
            <person name="Furlan L.R."/>
            <person name="Carraro D.M."/>
            <person name="Camarotte G."/>
            <person name="Almeida N.F. Jr."/>
            <person name="Carrer H."/>
            <person name="Coutinho L.L."/>
            <person name="El-Dorry H.A."/>
            <person name="Ferro M.I.T."/>
            <person name="Gagliardi P.R."/>
            <person name="Giglioti E."/>
            <person name="Goldman M.H.S."/>
            <person name="Goldman G.H."/>
            <person name="Kimura E.T."/>
            <person name="Ferro E.S."/>
            <person name="Kuramae E.E."/>
            <person name="Lemos E.G.M."/>
            <person name="Lemos M.V.F."/>
            <person name="Mauro S.M.Z."/>
            <person name="Machado M.A."/>
            <person name="Marino C.L."/>
            <person name="Menck C.F."/>
            <person name="Nunes L.R."/>
            <person name="Oliveira R.C."/>
            <person name="Pereira G.G."/>
            <person name="Siqueira W."/>
            <person name="de Souza A.A."/>
            <person name="Tsai S.M."/>
            <person name="Zanca A.S."/>
            <person name="Simpson A.J.G."/>
            <person name="Brumbley S.M."/>
            <person name="Setubal J.C."/>
        </authorList>
    </citation>
    <scope>NUCLEOTIDE SEQUENCE [LARGE SCALE GENOMIC DNA]</scope>
    <source>
        <strain>CTCB07</strain>
    </source>
</reference>
<accession>Q6AF21</accession>